<keyword id="KW-0067">ATP-binding</keyword>
<keyword id="KW-0963">Cytoplasm</keyword>
<keyword id="KW-1015">Disulfide bond</keyword>
<keyword id="KW-0547">Nucleotide-binding</keyword>
<keyword id="KW-1185">Reference proteome</keyword>
<keyword id="KW-0694">RNA-binding</keyword>
<keyword id="KW-0808">Transferase</keyword>
<keyword id="KW-0819">tRNA processing</keyword>
<keyword id="KW-0820">tRNA-binding</keyword>
<dbReference type="EC" id="2.8.1.13" evidence="1"/>
<dbReference type="EMBL" id="CP000133">
    <property type="protein sequence ID" value="ABC92208.1"/>
    <property type="molecule type" value="Genomic_DNA"/>
</dbReference>
<dbReference type="SMR" id="Q2K4M8"/>
<dbReference type="KEGG" id="ret:RHE_CH03452"/>
<dbReference type="eggNOG" id="COG0482">
    <property type="taxonomic scope" value="Bacteria"/>
</dbReference>
<dbReference type="HOGENOM" id="CLU_035188_0_1_5"/>
<dbReference type="Proteomes" id="UP000001936">
    <property type="component" value="Chromosome"/>
</dbReference>
<dbReference type="GO" id="GO:0005737">
    <property type="term" value="C:cytoplasm"/>
    <property type="evidence" value="ECO:0007669"/>
    <property type="project" value="UniProtKB-SubCell"/>
</dbReference>
<dbReference type="GO" id="GO:0005524">
    <property type="term" value="F:ATP binding"/>
    <property type="evidence" value="ECO:0007669"/>
    <property type="project" value="UniProtKB-KW"/>
</dbReference>
<dbReference type="GO" id="GO:0000049">
    <property type="term" value="F:tRNA binding"/>
    <property type="evidence" value="ECO:0007669"/>
    <property type="project" value="UniProtKB-KW"/>
</dbReference>
<dbReference type="GO" id="GO:0103016">
    <property type="term" value="F:tRNA-uridine 2-sulfurtransferase activity"/>
    <property type="evidence" value="ECO:0007669"/>
    <property type="project" value="UniProtKB-EC"/>
</dbReference>
<dbReference type="GO" id="GO:0002143">
    <property type="term" value="P:tRNA wobble position uridine thiolation"/>
    <property type="evidence" value="ECO:0007669"/>
    <property type="project" value="TreeGrafter"/>
</dbReference>
<dbReference type="CDD" id="cd01998">
    <property type="entry name" value="MnmA_TRMU-like"/>
    <property type="match status" value="1"/>
</dbReference>
<dbReference type="FunFam" id="2.30.30.280:FF:000001">
    <property type="entry name" value="tRNA-specific 2-thiouridylase MnmA"/>
    <property type="match status" value="1"/>
</dbReference>
<dbReference type="FunFam" id="3.40.50.620:FF:000115">
    <property type="entry name" value="tRNA-specific 2-thiouridylase MnmA"/>
    <property type="match status" value="1"/>
</dbReference>
<dbReference type="Gene3D" id="2.30.30.280">
    <property type="entry name" value="Adenine nucleotide alpha hydrolases-like domains"/>
    <property type="match status" value="1"/>
</dbReference>
<dbReference type="Gene3D" id="3.40.50.620">
    <property type="entry name" value="HUPs"/>
    <property type="match status" value="1"/>
</dbReference>
<dbReference type="Gene3D" id="2.40.30.10">
    <property type="entry name" value="Translation factors"/>
    <property type="match status" value="1"/>
</dbReference>
<dbReference type="HAMAP" id="MF_00144">
    <property type="entry name" value="tRNA_thiouridyl_MnmA"/>
    <property type="match status" value="1"/>
</dbReference>
<dbReference type="InterPro" id="IPR004506">
    <property type="entry name" value="MnmA-like"/>
</dbReference>
<dbReference type="InterPro" id="IPR046885">
    <property type="entry name" value="MnmA-like_C"/>
</dbReference>
<dbReference type="InterPro" id="IPR046884">
    <property type="entry name" value="MnmA-like_central"/>
</dbReference>
<dbReference type="InterPro" id="IPR023382">
    <property type="entry name" value="MnmA-like_central_sf"/>
</dbReference>
<dbReference type="InterPro" id="IPR014729">
    <property type="entry name" value="Rossmann-like_a/b/a_fold"/>
</dbReference>
<dbReference type="NCBIfam" id="NF001138">
    <property type="entry name" value="PRK00143.1"/>
    <property type="match status" value="1"/>
</dbReference>
<dbReference type="NCBIfam" id="TIGR00420">
    <property type="entry name" value="trmU"/>
    <property type="match status" value="1"/>
</dbReference>
<dbReference type="PANTHER" id="PTHR11933:SF5">
    <property type="entry name" value="MITOCHONDRIAL TRNA-SPECIFIC 2-THIOURIDYLASE 1"/>
    <property type="match status" value="1"/>
</dbReference>
<dbReference type="PANTHER" id="PTHR11933">
    <property type="entry name" value="TRNA 5-METHYLAMINOMETHYL-2-THIOURIDYLATE -METHYLTRANSFERASE"/>
    <property type="match status" value="1"/>
</dbReference>
<dbReference type="Pfam" id="PF03054">
    <property type="entry name" value="tRNA_Me_trans"/>
    <property type="match status" value="1"/>
</dbReference>
<dbReference type="Pfam" id="PF20258">
    <property type="entry name" value="tRNA_Me_trans_C"/>
    <property type="match status" value="1"/>
</dbReference>
<dbReference type="Pfam" id="PF20259">
    <property type="entry name" value="tRNA_Me_trans_M"/>
    <property type="match status" value="1"/>
</dbReference>
<dbReference type="SUPFAM" id="SSF52402">
    <property type="entry name" value="Adenine nucleotide alpha hydrolases-like"/>
    <property type="match status" value="1"/>
</dbReference>
<proteinExistence type="inferred from homology"/>
<accession>Q2K4M8</accession>
<gene>
    <name evidence="1" type="primary">mnmA</name>
    <name type="ordered locus">RHE_CH03452</name>
</gene>
<reference key="1">
    <citation type="journal article" date="2006" name="Proc. Natl. Acad. Sci. U.S.A.">
        <title>The partitioned Rhizobium etli genome: genetic and metabolic redundancy in seven interacting replicons.</title>
        <authorList>
            <person name="Gonzalez V."/>
            <person name="Santamaria R.I."/>
            <person name="Bustos P."/>
            <person name="Hernandez-Gonzalez I."/>
            <person name="Medrano-Soto A."/>
            <person name="Moreno-Hagelsieb G."/>
            <person name="Janga S.C."/>
            <person name="Ramirez M.A."/>
            <person name="Jimenez-Jacinto V."/>
            <person name="Collado-Vides J."/>
            <person name="Davila G."/>
        </authorList>
    </citation>
    <scope>NUCLEOTIDE SEQUENCE [LARGE SCALE GENOMIC DNA]</scope>
    <source>
        <strain>ATCC 51251 / DSM 11541 / JCM 21823 / NBRC 15573 / CFN 42</strain>
    </source>
</reference>
<comment type="function">
    <text evidence="1">Catalyzes the 2-thiolation of uridine at the wobble position (U34) of tRNA, leading to the formation of s(2)U34.</text>
</comment>
<comment type="catalytic activity">
    <reaction evidence="1">
        <text>S-sulfanyl-L-cysteinyl-[protein] + uridine(34) in tRNA + AH2 + ATP = 2-thiouridine(34) in tRNA + L-cysteinyl-[protein] + A + AMP + diphosphate + H(+)</text>
        <dbReference type="Rhea" id="RHEA:47032"/>
        <dbReference type="Rhea" id="RHEA-COMP:10131"/>
        <dbReference type="Rhea" id="RHEA-COMP:11726"/>
        <dbReference type="Rhea" id="RHEA-COMP:11727"/>
        <dbReference type="Rhea" id="RHEA-COMP:11728"/>
        <dbReference type="ChEBI" id="CHEBI:13193"/>
        <dbReference type="ChEBI" id="CHEBI:15378"/>
        <dbReference type="ChEBI" id="CHEBI:17499"/>
        <dbReference type="ChEBI" id="CHEBI:29950"/>
        <dbReference type="ChEBI" id="CHEBI:30616"/>
        <dbReference type="ChEBI" id="CHEBI:33019"/>
        <dbReference type="ChEBI" id="CHEBI:61963"/>
        <dbReference type="ChEBI" id="CHEBI:65315"/>
        <dbReference type="ChEBI" id="CHEBI:87170"/>
        <dbReference type="ChEBI" id="CHEBI:456215"/>
        <dbReference type="EC" id="2.8.1.13"/>
    </reaction>
</comment>
<comment type="subcellular location">
    <subcellularLocation>
        <location evidence="1">Cytoplasm</location>
    </subcellularLocation>
</comment>
<comment type="similarity">
    <text evidence="1">Belongs to the MnmA/TRMU family.</text>
</comment>
<protein>
    <recommendedName>
        <fullName evidence="1">tRNA-specific 2-thiouridylase MnmA</fullName>
        <ecNumber evidence="1">2.8.1.13</ecNumber>
    </recommendedName>
</protein>
<evidence type="ECO:0000255" key="1">
    <source>
        <dbReference type="HAMAP-Rule" id="MF_00144"/>
    </source>
</evidence>
<sequence length="408" mass="43849">MSAQNLAPPLNTLDFDKKPEETRVVVAMSGGVDSSVVAGLLKQQGYDVLGITLQLYDHGAAVHRAGSCCAGQDIDDARHVCETLGIPHYVLDYEKRFRETVINPFAESYVAGETPIPCVSCNQTVKFADLLATAKELGADALATGHYIRSRPNPSSEHPGRRALFRPADADRDQSYFLFATTQEQIDYLRFPLGGLPKAETRRLAEEMGLVVAKKADSQDICFVPQGKYSDIITKLKPNAALAGEIVHLDGRVLGSHEGILHFTIGQRRGIGIATGEPLYVVYLDARSRRVIVGPKEALETHRVYLRDVNWLGDETLAEAASGEGFACYAKVRSTRAPAPAVLHVDATGTYVDLTIGEAGIAPGQACALYSAPGDDARVFGGGFIERSEREPSAEASLKALLASPVAA</sequence>
<name>MNMA_RHIEC</name>
<organism>
    <name type="scientific">Rhizobium etli (strain ATCC 51251 / DSM 11541 / JCM 21823 / NBRC 15573 / CFN 42)</name>
    <dbReference type="NCBI Taxonomy" id="347834"/>
    <lineage>
        <taxon>Bacteria</taxon>
        <taxon>Pseudomonadati</taxon>
        <taxon>Pseudomonadota</taxon>
        <taxon>Alphaproteobacteria</taxon>
        <taxon>Hyphomicrobiales</taxon>
        <taxon>Rhizobiaceae</taxon>
        <taxon>Rhizobium/Agrobacterium group</taxon>
        <taxon>Rhizobium</taxon>
    </lineage>
</organism>
<feature type="chain" id="PRO_0000349766" description="tRNA-specific 2-thiouridylase MnmA">
    <location>
        <begin position="1"/>
        <end position="408"/>
    </location>
</feature>
<feature type="region of interest" description="Interaction with tRNA" evidence="1">
    <location>
        <begin position="172"/>
        <end position="174"/>
    </location>
</feature>
<feature type="active site" description="Nucleophile" evidence="1">
    <location>
        <position position="121"/>
    </location>
</feature>
<feature type="active site" description="Cysteine persulfide intermediate" evidence="1">
    <location>
        <position position="222"/>
    </location>
</feature>
<feature type="binding site" evidence="1">
    <location>
        <begin position="27"/>
        <end position="34"/>
    </location>
    <ligand>
        <name>ATP</name>
        <dbReference type="ChEBI" id="CHEBI:30616"/>
    </ligand>
</feature>
<feature type="binding site" evidence="1">
    <location>
        <position position="53"/>
    </location>
    <ligand>
        <name>ATP</name>
        <dbReference type="ChEBI" id="CHEBI:30616"/>
    </ligand>
</feature>
<feature type="binding site" evidence="1">
    <location>
        <position position="145"/>
    </location>
    <ligand>
        <name>ATP</name>
        <dbReference type="ChEBI" id="CHEBI:30616"/>
    </ligand>
</feature>
<feature type="site" description="Interaction with tRNA" evidence="1">
    <location>
        <position position="146"/>
    </location>
</feature>
<feature type="site" description="Interaction with tRNA" evidence="1">
    <location>
        <position position="365"/>
    </location>
</feature>
<feature type="disulfide bond" description="Alternate" evidence="1">
    <location>
        <begin position="121"/>
        <end position="222"/>
    </location>
</feature>